<accession>P0A5H9</accession>
<accession>A0A1R3Y438</accession>
<accession>Q50727</accession>
<accession>X2BNK9</accession>
<keyword id="KW-0963">Cytoplasm</keyword>
<keyword id="KW-0444">Lipid biosynthesis</keyword>
<keyword id="KW-0443">Lipid metabolism</keyword>
<keyword id="KW-0460">Magnesium</keyword>
<keyword id="KW-0479">Metal-binding</keyword>
<keyword id="KW-1185">Reference proteome</keyword>
<keyword id="KW-0808">Transferase</keyword>
<sequence length="359" mass="38852">MRGTDEKYGLPPQPDSDRMTRRTLPVLGLAHELITPTLRQMADRLDPHMRPVVSYHLGWSDERGRPVNNNCGKAIRPALVFVAAEAAGADPHSAIPGAVSVELVHNFSLVHDDLMDRDEHRRHRPTVWALWGDAMALLAGDAMLSLAHEVLLDCDSPHVGAALRAISEATRELIRGQAADTAFESRTDVALDECLKMAEGKTAALMAASAEVGALLAGAPRSVREALVAYGRHIGLAFQLVDDLLGIWGRPEITGKPVYSDLRSRKKTLPVTWTVAHGGSAGRRLAAWLVDETGSQTASDDELAAVAELIECGGGRRWASAEARRHVTQGIDMVARIGIPDRPAAELQDLAHYIVDRQA</sequence>
<reference key="1">
    <citation type="journal article" date="2003" name="Proc. Natl. Acad. Sci. U.S.A.">
        <title>The complete genome sequence of Mycobacterium bovis.</title>
        <authorList>
            <person name="Garnier T."/>
            <person name="Eiglmeier K."/>
            <person name="Camus J.-C."/>
            <person name="Medina N."/>
            <person name="Mansoor H."/>
            <person name="Pryor M."/>
            <person name="Duthoy S."/>
            <person name="Grondin S."/>
            <person name="Lacroix C."/>
            <person name="Monsempe C."/>
            <person name="Simon S."/>
            <person name="Harris B."/>
            <person name="Atkin R."/>
            <person name="Doggett J."/>
            <person name="Mayes R."/>
            <person name="Keating L."/>
            <person name="Wheeler P.R."/>
            <person name="Parkhill J."/>
            <person name="Barrell B.G."/>
            <person name="Cole S.T."/>
            <person name="Gordon S.V."/>
            <person name="Hewinson R.G."/>
        </authorList>
    </citation>
    <scope>NUCLEOTIDE SEQUENCE [LARGE SCALE GENOMIC DNA]</scope>
    <source>
        <strain>ATCC BAA-935 / AF2122/97</strain>
    </source>
</reference>
<reference key="2">
    <citation type="journal article" date="2017" name="Genome Announc.">
        <title>Updated reference genome sequence and annotation of Mycobacterium bovis AF2122/97.</title>
        <authorList>
            <person name="Malone K.M."/>
            <person name="Farrell D."/>
            <person name="Stuber T.P."/>
            <person name="Schubert O.T."/>
            <person name="Aebersold R."/>
            <person name="Robbe-Austerman S."/>
            <person name="Gordon S.V."/>
        </authorList>
    </citation>
    <scope>NUCLEOTIDE SEQUENCE [LARGE SCALE GENOMIC DNA]</scope>
    <scope>GENOME REANNOTATION</scope>
    <source>
        <strain>ATCC BAA-935 / AF2122/97</strain>
    </source>
</reference>
<dbReference type="EC" id="2.5.1.10" evidence="3"/>
<dbReference type="EMBL" id="LT708304">
    <property type="protein sequence ID" value="SIU02060.1"/>
    <property type="molecule type" value="Genomic_DNA"/>
</dbReference>
<dbReference type="RefSeq" id="NP_857072.1">
    <property type="nucleotide sequence ID" value="NC_002945.3"/>
</dbReference>
<dbReference type="SMR" id="P0A5H9"/>
<dbReference type="KEGG" id="mbo:BQ2027_MB3431C"/>
<dbReference type="PATRIC" id="fig|233413.5.peg.3766"/>
<dbReference type="Proteomes" id="UP000001419">
    <property type="component" value="Chromosome"/>
</dbReference>
<dbReference type="GO" id="GO:0005737">
    <property type="term" value="C:cytoplasm"/>
    <property type="evidence" value="ECO:0007669"/>
    <property type="project" value="UniProtKB-SubCell"/>
</dbReference>
<dbReference type="GO" id="GO:0004337">
    <property type="term" value="F:(2E,6E)-farnesyl diphosphate synthase activity"/>
    <property type="evidence" value="ECO:0007669"/>
    <property type="project" value="UniProtKB-EC"/>
</dbReference>
<dbReference type="GO" id="GO:0046872">
    <property type="term" value="F:metal ion binding"/>
    <property type="evidence" value="ECO:0007669"/>
    <property type="project" value="UniProtKB-KW"/>
</dbReference>
<dbReference type="GO" id="GO:0008299">
    <property type="term" value="P:isoprenoid biosynthetic process"/>
    <property type="evidence" value="ECO:0007669"/>
    <property type="project" value="InterPro"/>
</dbReference>
<dbReference type="CDD" id="cd00685">
    <property type="entry name" value="Trans_IPPS_HT"/>
    <property type="match status" value="1"/>
</dbReference>
<dbReference type="Gene3D" id="1.10.600.10">
    <property type="entry name" value="Farnesyl Diphosphate Synthase"/>
    <property type="match status" value="1"/>
</dbReference>
<dbReference type="InterPro" id="IPR008949">
    <property type="entry name" value="Isoprenoid_synthase_dom_sf"/>
</dbReference>
<dbReference type="InterPro" id="IPR000092">
    <property type="entry name" value="Polyprenyl_synt"/>
</dbReference>
<dbReference type="InterPro" id="IPR033749">
    <property type="entry name" value="Polyprenyl_synt_CS"/>
</dbReference>
<dbReference type="PANTHER" id="PTHR12001:SF71">
    <property type="entry name" value="(2E,6E)-FARNESYL DIPHOSPHATE SYNTHASE"/>
    <property type="match status" value="1"/>
</dbReference>
<dbReference type="PANTHER" id="PTHR12001">
    <property type="entry name" value="GERANYLGERANYL PYROPHOSPHATE SYNTHASE"/>
    <property type="match status" value="1"/>
</dbReference>
<dbReference type="Pfam" id="PF00348">
    <property type="entry name" value="polyprenyl_synt"/>
    <property type="match status" value="1"/>
</dbReference>
<dbReference type="SFLD" id="SFLDS00005">
    <property type="entry name" value="Isoprenoid_Synthase_Type_I"/>
    <property type="match status" value="1"/>
</dbReference>
<dbReference type="SFLD" id="SFLDG01017">
    <property type="entry name" value="Polyprenyl_Transferase_Like"/>
    <property type="match status" value="1"/>
</dbReference>
<dbReference type="SUPFAM" id="SSF48576">
    <property type="entry name" value="Terpenoid synthases"/>
    <property type="match status" value="1"/>
</dbReference>
<dbReference type="PROSITE" id="PS00723">
    <property type="entry name" value="POLYPRENYL_SYNTHASE_1"/>
    <property type="match status" value="1"/>
</dbReference>
<dbReference type="PROSITE" id="PS00444">
    <property type="entry name" value="POLYPRENYL_SYNTHASE_2"/>
    <property type="match status" value="1"/>
</dbReference>
<organism>
    <name type="scientific">Mycobacterium bovis (strain ATCC BAA-935 / AF2122/97)</name>
    <dbReference type="NCBI Taxonomy" id="233413"/>
    <lineage>
        <taxon>Bacteria</taxon>
        <taxon>Bacillati</taxon>
        <taxon>Actinomycetota</taxon>
        <taxon>Actinomycetes</taxon>
        <taxon>Mycobacteriales</taxon>
        <taxon>Mycobacteriaceae</taxon>
        <taxon>Mycobacterium</taxon>
        <taxon>Mycobacterium tuberculosis complex</taxon>
    </lineage>
</organism>
<name>FPPS_MYCBO</name>
<gene>
    <name type="ordered locus">BQ2027_MB3431C</name>
</gene>
<evidence type="ECO:0000250" key="1"/>
<evidence type="ECO:0000250" key="2">
    <source>
        <dbReference type="UniProtKB" id="P14324"/>
    </source>
</evidence>
<evidence type="ECO:0000250" key="3">
    <source>
        <dbReference type="UniProtKB" id="P9WKH1"/>
    </source>
</evidence>
<evidence type="ECO:0000250" key="4">
    <source>
        <dbReference type="UniProtKB" id="Q12051"/>
    </source>
</evidence>
<evidence type="ECO:0000256" key="5">
    <source>
        <dbReference type="SAM" id="MobiDB-lite"/>
    </source>
</evidence>
<evidence type="ECO:0000305" key="6"/>
<proteinExistence type="inferred from homology"/>
<comment type="function">
    <text evidence="3">Catalyzes the condensation of isopentenyl pyrophosphate (IPP) with geranyl diphosphate (GPP) to yield (2E,6E)-farnesyl diphosphate (E,E-FPP). May be used for squalene and possibly sterol biosynthesis.</text>
</comment>
<comment type="catalytic activity">
    <reaction evidence="3">
        <text>isopentenyl diphosphate + (2E)-geranyl diphosphate = (2E,6E)-farnesyl diphosphate + diphosphate</text>
        <dbReference type="Rhea" id="RHEA:19361"/>
        <dbReference type="ChEBI" id="CHEBI:33019"/>
        <dbReference type="ChEBI" id="CHEBI:58057"/>
        <dbReference type="ChEBI" id="CHEBI:128769"/>
        <dbReference type="ChEBI" id="CHEBI:175763"/>
        <dbReference type="EC" id="2.5.1.10"/>
    </reaction>
</comment>
<comment type="cofactor">
    <cofactor evidence="3">
        <name>Mg(2+)</name>
        <dbReference type="ChEBI" id="CHEBI:18420"/>
    </cofactor>
    <text evidence="3">Binds 2 Mg(2+) ions per subunit.</text>
</comment>
<comment type="pathway">
    <text evidence="3">Isoprenoid biosynthesis; farnesyl diphosphate biosynthesis; farnesyl diphosphate from geranyl diphosphate and isopentenyl diphosphate.</text>
</comment>
<comment type="subcellular location">
    <subcellularLocation>
        <location evidence="3">Cytoplasm</location>
    </subcellularLocation>
</comment>
<comment type="similarity">
    <text evidence="6">Belongs to the FPP/GGPP synthase family.</text>
</comment>
<feature type="chain" id="PRO_0000123969" description="(2E,6E)-farnesyl diphosphate synthase">
    <location>
        <begin position="1"/>
        <end position="359"/>
    </location>
</feature>
<feature type="region of interest" description="Disordered" evidence="5">
    <location>
        <begin position="1"/>
        <end position="21"/>
    </location>
</feature>
<feature type="short sequence motif" description="DDXXD motif" evidence="3">
    <location>
        <begin position="112"/>
        <end position="116"/>
    </location>
</feature>
<feature type="short sequence motif" description="DDXXD motif" evidence="3">
    <location>
        <begin position="242"/>
        <end position="246"/>
    </location>
</feature>
<feature type="binding site" evidence="2">
    <location>
        <position position="73"/>
    </location>
    <ligand>
        <name>isopentenyl diphosphate</name>
        <dbReference type="ChEBI" id="CHEBI:128769"/>
    </ligand>
</feature>
<feature type="binding site" evidence="2">
    <location>
        <position position="76"/>
    </location>
    <ligand>
        <name>isopentenyl diphosphate</name>
        <dbReference type="ChEBI" id="CHEBI:128769"/>
    </ligand>
</feature>
<feature type="binding site" evidence="4">
    <location>
        <position position="105"/>
    </location>
    <ligand>
        <name>isopentenyl diphosphate</name>
        <dbReference type="ChEBI" id="CHEBI:128769"/>
    </ligand>
</feature>
<feature type="binding site" evidence="2">
    <location>
        <position position="112"/>
    </location>
    <ligand>
        <name>Mg(2+)</name>
        <dbReference type="ChEBI" id="CHEBI:18420"/>
        <label>1</label>
    </ligand>
</feature>
<feature type="binding site" evidence="2">
    <location>
        <position position="112"/>
    </location>
    <ligand>
        <name>Mg(2+)</name>
        <dbReference type="ChEBI" id="CHEBI:18420"/>
        <label>2</label>
    </ligand>
</feature>
<feature type="binding site" evidence="2">
    <location>
        <position position="116"/>
    </location>
    <ligand>
        <name>Mg(2+)</name>
        <dbReference type="ChEBI" id="CHEBI:18420"/>
        <label>1</label>
    </ligand>
</feature>
<feature type="binding site" evidence="2">
    <location>
        <position position="116"/>
    </location>
    <ligand>
        <name>Mg(2+)</name>
        <dbReference type="ChEBI" id="CHEBI:18420"/>
        <label>2</label>
    </ligand>
</feature>
<feature type="binding site" evidence="1">
    <location>
        <position position="121"/>
    </location>
    <ligand>
        <name>(2E)-geranyl diphosphate</name>
        <dbReference type="ChEBI" id="CHEBI:58057"/>
    </ligand>
</feature>
<feature type="binding site" evidence="2">
    <location>
        <position position="122"/>
    </location>
    <ligand>
        <name>isopentenyl diphosphate</name>
        <dbReference type="ChEBI" id="CHEBI:128769"/>
    </ligand>
</feature>
<feature type="binding site" evidence="1">
    <location>
        <position position="201"/>
    </location>
    <ligand>
        <name>(2E)-geranyl diphosphate</name>
        <dbReference type="ChEBI" id="CHEBI:58057"/>
    </ligand>
</feature>
<feature type="binding site" evidence="1">
    <location>
        <position position="202"/>
    </location>
    <ligand>
        <name>(2E)-geranyl diphosphate</name>
        <dbReference type="ChEBI" id="CHEBI:58057"/>
    </ligand>
</feature>
<feature type="binding site" evidence="1">
    <location>
        <position position="239"/>
    </location>
    <ligand>
        <name>(2E)-geranyl diphosphate</name>
        <dbReference type="ChEBI" id="CHEBI:58057"/>
    </ligand>
</feature>
<feature type="binding site" evidence="1">
    <location>
        <position position="256"/>
    </location>
    <ligand>
        <name>(2E)-geranyl diphosphate</name>
        <dbReference type="ChEBI" id="CHEBI:58057"/>
    </ligand>
</feature>
<feature type="binding site" evidence="1">
    <location>
        <position position="266"/>
    </location>
    <ligand>
        <name>(2E)-geranyl diphosphate</name>
        <dbReference type="ChEBI" id="CHEBI:58057"/>
    </ligand>
</feature>
<protein>
    <recommendedName>
        <fullName evidence="3">(2E,6E)-farnesyl diphosphate synthase</fullName>
        <shortName evidence="3">E,E-FPP synthase</shortName>
        <shortName evidence="3">FPP synthase</shortName>
        <ecNumber evidence="3">2.5.1.10</ecNumber>
    </recommendedName>
</protein>